<proteinExistence type="inferred from homology"/>
<accession>B7N0W5</accession>
<organism>
    <name type="scientific">Escherichia coli O81 (strain ED1a)</name>
    <dbReference type="NCBI Taxonomy" id="585397"/>
    <lineage>
        <taxon>Bacteria</taxon>
        <taxon>Pseudomonadati</taxon>
        <taxon>Pseudomonadota</taxon>
        <taxon>Gammaproteobacteria</taxon>
        <taxon>Enterobacterales</taxon>
        <taxon>Enterobacteriaceae</taxon>
        <taxon>Escherichia</taxon>
    </lineage>
</organism>
<feature type="chain" id="PRO_0000385927" description="GTPase Obg">
    <location>
        <begin position="1"/>
        <end position="390"/>
    </location>
</feature>
<feature type="domain" description="Obg" evidence="2">
    <location>
        <begin position="1"/>
        <end position="159"/>
    </location>
</feature>
<feature type="domain" description="OBG-type G" evidence="1">
    <location>
        <begin position="160"/>
        <end position="333"/>
    </location>
</feature>
<feature type="region of interest" description="Disordered" evidence="3">
    <location>
        <begin position="127"/>
        <end position="147"/>
    </location>
</feature>
<feature type="compositionally biased region" description="Polar residues" evidence="3">
    <location>
        <begin position="129"/>
        <end position="145"/>
    </location>
</feature>
<feature type="binding site" evidence="1">
    <location>
        <begin position="166"/>
        <end position="173"/>
    </location>
    <ligand>
        <name>GTP</name>
        <dbReference type="ChEBI" id="CHEBI:37565"/>
    </ligand>
</feature>
<feature type="binding site" evidence="1">
    <location>
        <position position="173"/>
    </location>
    <ligand>
        <name>Mg(2+)</name>
        <dbReference type="ChEBI" id="CHEBI:18420"/>
    </ligand>
</feature>
<feature type="binding site" evidence="1">
    <location>
        <begin position="191"/>
        <end position="195"/>
    </location>
    <ligand>
        <name>GTP</name>
        <dbReference type="ChEBI" id="CHEBI:37565"/>
    </ligand>
</feature>
<feature type="binding site" evidence="1">
    <location>
        <position position="193"/>
    </location>
    <ligand>
        <name>Mg(2+)</name>
        <dbReference type="ChEBI" id="CHEBI:18420"/>
    </ligand>
</feature>
<feature type="binding site" evidence="1">
    <location>
        <begin position="213"/>
        <end position="216"/>
    </location>
    <ligand>
        <name>GTP</name>
        <dbReference type="ChEBI" id="CHEBI:37565"/>
    </ligand>
</feature>
<feature type="binding site" evidence="1">
    <location>
        <begin position="283"/>
        <end position="286"/>
    </location>
    <ligand>
        <name>GTP</name>
        <dbReference type="ChEBI" id="CHEBI:37565"/>
    </ligand>
</feature>
<feature type="binding site" evidence="1">
    <location>
        <begin position="314"/>
        <end position="316"/>
    </location>
    <ligand>
        <name>GTP</name>
        <dbReference type="ChEBI" id="CHEBI:37565"/>
    </ligand>
</feature>
<protein>
    <recommendedName>
        <fullName evidence="1">GTPase Obg</fullName>
        <ecNumber evidence="1">3.6.5.-</ecNumber>
    </recommendedName>
    <alternativeName>
        <fullName evidence="1">GTP-binding protein Obg</fullName>
    </alternativeName>
</protein>
<evidence type="ECO:0000255" key="1">
    <source>
        <dbReference type="HAMAP-Rule" id="MF_01454"/>
    </source>
</evidence>
<evidence type="ECO:0000255" key="2">
    <source>
        <dbReference type="PROSITE-ProRule" id="PRU01231"/>
    </source>
</evidence>
<evidence type="ECO:0000256" key="3">
    <source>
        <dbReference type="SAM" id="MobiDB-lite"/>
    </source>
</evidence>
<keyword id="KW-0963">Cytoplasm</keyword>
<keyword id="KW-0342">GTP-binding</keyword>
<keyword id="KW-0378">Hydrolase</keyword>
<keyword id="KW-0460">Magnesium</keyword>
<keyword id="KW-0479">Metal-binding</keyword>
<keyword id="KW-0547">Nucleotide-binding</keyword>
<gene>
    <name evidence="1" type="primary">obg</name>
    <name type="ordered locus">ECED1_3841</name>
</gene>
<comment type="function">
    <text evidence="1">An essential GTPase which binds GTP, GDP and possibly (p)ppGpp with moderate affinity, with high nucleotide exchange rates and a fairly low GTP hydrolysis rate. Plays a role in control of the cell cycle, stress response, ribosome biogenesis and in those bacteria that undergo differentiation, in morphogenesis control.</text>
</comment>
<comment type="cofactor">
    <cofactor evidence="1">
        <name>Mg(2+)</name>
        <dbReference type="ChEBI" id="CHEBI:18420"/>
    </cofactor>
</comment>
<comment type="subunit">
    <text evidence="1">Monomer.</text>
</comment>
<comment type="subcellular location">
    <subcellularLocation>
        <location evidence="1">Cytoplasm</location>
    </subcellularLocation>
</comment>
<comment type="similarity">
    <text evidence="1">Belongs to the TRAFAC class OBG-HflX-like GTPase superfamily. OBG GTPase family.</text>
</comment>
<name>OBG_ECO81</name>
<reference key="1">
    <citation type="journal article" date="2009" name="PLoS Genet.">
        <title>Organised genome dynamics in the Escherichia coli species results in highly diverse adaptive paths.</title>
        <authorList>
            <person name="Touchon M."/>
            <person name="Hoede C."/>
            <person name="Tenaillon O."/>
            <person name="Barbe V."/>
            <person name="Baeriswyl S."/>
            <person name="Bidet P."/>
            <person name="Bingen E."/>
            <person name="Bonacorsi S."/>
            <person name="Bouchier C."/>
            <person name="Bouvet O."/>
            <person name="Calteau A."/>
            <person name="Chiapello H."/>
            <person name="Clermont O."/>
            <person name="Cruveiller S."/>
            <person name="Danchin A."/>
            <person name="Diard M."/>
            <person name="Dossat C."/>
            <person name="Karoui M.E."/>
            <person name="Frapy E."/>
            <person name="Garry L."/>
            <person name="Ghigo J.M."/>
            <person name="Gilles A.M."/>
            <person name="Johnson J."/>
            <person name="Le Bouguenec C."/>
            <person name="Lescat M."/>
            <person name="Mangenot S."/>
            <person name="Martinez-Jehanne V."/>
            <person name="Matic I."/>
            <person name="Nassif X."/>
            <person name="Oztas S."/>
            <person name="Petit M.A."/>
            <person name="Pichon C."/>
            <person name="Rouy Z."/>
            <person name="Ruf C.S."/>
            <person name="Schneider D."/>
            <person name="Tourret J."/>
            <person name="Vacherie B."/>
            <person name="Vallenet D."/>
            <person name="Medigue C."/>
            <person name="Rocha E.P.C."/>
            <person name="Denamur E."/>
        </authorList>
    </citation>
    <scope>NUCLEOTIDE SEQUENCE [LARGE SCALE GENOMIC DNA]</scope>
    <source>
        <strain>ED1a</strain>
    </source>
</reference>
<dbReference type="EC" id="3.6.5.-" evidence="1"/>
<dbReference type="EMBL" id="CU928162">
    <property type="protein sequence ID" value="CAR09983.2"/>
    <property type="molecule type" value="Genomic_DNA"/>
</dbReference>
<dbReference type="SMR" id="B7N0W5"/>
<dbReference type="KEGG" id="ecq:ECED1_3841"/>
<dbReference type="HOGENOM" id="CLU_011747_2_0_6"/>
<dbReference type="Proteomes" id="UP000000748">
    <property type="component" value="Chromosome"/>
</dbReference>
<dbReference type="GO" id="GO:0005737">
    <property type="term" value="C:cytoplasm"/>
    <property type="evidence" value="ECO:0007669"/>
    <property type="project" value="UniProtKB-SubCell"/>
</dbReference>
<dbReference type="GO" id="GO:0005525">
    <property type="term" value="F:GTP binding"/>
    <property type="evidence" value="ECO:0007669"/>
    <property type="project" value="UniProtKB-UniRule"/>
</dbReference>
<dbReference type="GO" id="GO:0003924">
    <property type="term" value="F:GTPase activity"/>
    <property type="evidence" value="ECO:0007669"/>
    <property type="project" value="UniProtKB-UniRule"/>
</dbReference>
<dbReference type="GO" id="GO:0000287">
    <property type="term" value="F:magnesium ion binding"/>
    <property type="evidence" value="ECO:0007669"/>
    <property type="project" value="InterPro"/>
</dbReference>
<dbReference type="GO" id="GO:0042254">
    <property type="term" value="P:ribosome biogenesis"/>
    <property type="evidence" value="ECO:0007669"/>
    <property type="project" value="UniProtKB-UniRule"/>
</dbReference>
<dbReference type="CDD" id="cd01898">
    <property type="entry name" value="Obg"/>
    <property type="match status" value="1"/>
</dbReference>
<dbReference type="FunFam" id="2.70.210.12:FF:000001">
    <property type="entry name" value="GTPase Obg"/>
    <property type="match status" value="1"/>
</dbReference>
<dbReference type="FunFam" id="3.40.50.300:FF:000185">
    <property type="entry name" value="GTPase Obg"/>
    <property type="match status" value="1"/>
</dbReference>
<dbReference type="Gene3D" id="2.70.210.12">
    <property type="entry name" value="GTP1/OBG domain"/>
    <property type="match status" value="1"/>
</dbReference>
<dbReference type="Gene3D" id="3.40.50.300">
    <property type="entry name" value="P-loop containing nucleotide triphosphate hydrolases"/>
    <property type="match status" value="1"/>
</dbReference>
<dbReference type="HAMAP" id="MF_01454">
    <property type="entry name" value="GTPase_Obg"/>
    <property type="match status" value="1"/>
</dbReference>
<dbReference type="InterPro" id="IPR031167">
    <property type="entry name" value="G_OBG"/>
</dbReference>
<dbReference type="InterPro" id="IPR006073">
    <property type="entry name" value="GTP-bd"/>
</dbReference>
<dbReference type="InterPro" id="IPR014100">
    <property type="entry name" value="GTP-bd_Obg/CgtA"/>
</dbReference>
<dbReference type="InterPro" id="IPR006074">
    <property type="entry name" value="GTP1-OBG_CS"/>
</dbReference>
<dbReference type="InterPro" id="IPR006169">
    <property type="entry name" value="GTP1_OBG_dom"/>
</dbReference>
<dbReference type="InterPro" id="IPR036726">
    <property type="entry name" value="GTP1_OBG_dom_sf"/>
</dbReference>
<dbReference type="InterPro" id="IPR045086">
    <property type="entry name" value="OBG_GTPase"/>
</dbReference>
<dbReference type="InterPro" id="IPR027417">
    <property type="entry name" value="P-loop_NTPase"/>
</dbReference>
<dbReference type="NCBIfam" id="TIGR02729">
    <property type="entry name" value="Obg_CgtA"/>
    <property type="match status" value="1"/>
</dbReference>
<dbReference type="NCBIfam" id="NF008955">
    <property type="entry name" value="PRK12297.1"/>
    <property type="match status" value="1"/>
</dbReference>
<dbReference type="NCBIfam" id="NF008956">
    <property type="entry name" value="PRK12299.1"/>
    <property type="match status" value="1"/>
</dbReference>
<dbReference type="PANTHER" id="PTHR11702">
    <property type="entry name" value="DEVELOPMENTALLY REGULATED GTP-BINDING PROTEIN-RELATED"/>
    <property type="match status" value="1"/>
</dbReference>
<dbReference type="PANTHER" id="PTHR11702:SF31">
    <property type="entry name" value="MITOCHONDRIAL RIBOSOME-ASSOCIATED GTPASE 2"/>
    <property type="match status" value="1"/>
</dbReference>
<dbReference type="Pfam" id="PF01018">
    <property type="entry name" value="GTP1_OBG"/>
    <property type="match status" value="1"/>
</dbReference>
<dbReference type="Pfam" id="PF01926">
    <property type="entry name" value="MMR_HSR1"/>
    <property type="match status" value="1"/>
</dbReference>
<dbReference type="PIRSF" id="PIRSF002401">
    <property type="entry name" value="GTP_bd_Obg/CgtA"/>
    <property type="match status" value="1"/>
</dbReference>
<dbReference type="PRINTS" id="PR00326">
    <property type="entry name" value="GTP1OBG"/>
</dbReference>
<dbReference type="SUPFAM" id="SSF82051">
    <property type="entry name" value="Obg GTP-binding protein N-terminal domain"/>
    <property type="match status" value="1"/>
</dbReference>
<dbReference type="SUPFAM" id="SSF52540">
    <property type="entry name" value="P-loop containing nucleoside triphosphate hydrolases"/>
    <property type="match status" value="1"/>
</dbReference>
<dbReference type="PROSITE" id="PS51710">
    <property type="entry name" value="G_OBG"/>
    <property type="match status" value="1"/>
</dbReference>
<dbReference type="PROSITE" id="PS00905">
    <property type="entry name" value="GTP1_OBG"/>
    <property type="match status" value="1"/>
</dbReference>
<dbReference type="PROSITE" id="PS51883">
    <property type="entry name" value="OBG"/>
    <property type="match status" value="1"/>
</dbReference>
<sequence length="390" mass="43228">MKFVDEASILVVAGDGGNGCVSFRREKYIPKGGPDGGDGGDGGDVWMEADENLNTLIDYRFEKSFRAERGQNGASRDCTGKRGKDVTIKVPVGTRVIDQGTGETMGDMTKHGQRLLVAKGGWHGLGNTRFKSSVNRTPRQKTNGTPGDKRELLLELMLLADVGMLGMPNAGKSTFIRAVSAAKPKVADYPFTTLVPSLGVVRMDNEKSFVVADIPGLIEGAAEGAGLGIRFLKHLERCRVLLHLIDIDPIDGTDPVENARIIISELEKYSQDLAAKPRWLVFNKIDLLDKAEAEEKAKAIAEALGWEDKYYLISAASGLGVKDLCWDVMTFIIENPVVQAEEAKQPEKVEFMWDDYHRQQLEEIAEEDDEDWDDDWDEDDEEGVEFIYKR</sequence>